<feature type="chain" id="PRO_0000224672" description="UDP-N-acetylenolpyruvoylglucosamine reductase">
    <location>
        <begin position="1"/>
        <end position="349"/>
    </location>
</feature>
<feature type="domain" description="FAD-binding PCMH-type" evidence="1">
    <location>
        <begin position="26"/>
        <end position="197"/>
    </location>
</feature>
<feature type="active site" evidence="1">
    <location>
        <position position="173"/>
    </location>
</feature>
<feature type="active site" description="Proton donor" evidence="1">
    <location>
        <position position="249"/>
    </location>
</feature>
<feature type="active site" evidence="1">
    <location>
        <position position="345"/>
    </location>
</feature>
<name>MURB_BURP1</name>
<keyword id="KW-0131">Cell cycle</keyword>
<keyword id="KW-0132">Cell division</keyword>
<keyword id="KW-0133">Cell shape</keyword>
<keyword id="KW-0961">Cell wall biogenesis/degradation</keyword>
<keyword id="KW-0963">Cytoplasm</keyword>
<keyword id="KW-0274">FAD</keyword>
<keyword id="KW-0285">Flavoprotein</keyword>
<keyword id="KW-0521">NADP</keyword>
<keyword id="KW-0560">Oxidoreductase</keyword>
<keyword id="KW-0573">Peptidoglycan synthesis</keyword>
<comment type="function">
    <text evidence="1">Cell wall formation.</text>
</comment>
<comment type="catalytic activity">
    <reaction evidence="1">
        <text>UDP-N-acetyl-alpha-D-muramate + NADP(+) = UDP-N-acetyl-3-O-(1-carboxyvinyl)-alpha-D-glucosamine + NADPH + H(+)</text>
        <dbReference type="Rhea" id="RHEA:12248"/>
        <dbReference type="ChEBI" id="CHEBI:15378"/>
        <dbReference type="ChEBI" id="CHEBI:57783"/>
        <dbReference type="ChEBI" id="CHEBI:58349"/>
        <dbReference type="ChEBI" id="CHEBI:68483"/>
        <dbReference type="ChEBI" id="CHEBI:70757"/>
        <dbReference type="EC" id="1.3.1.98"/>
    </reaction>
</comment>
<comment type="cofactor">
    <cofactor evidence="1">
        <name>FAD</name>
        <dbReference type="ChEBI" id="CHEBI:57692"/>
    </cofactor>
</comment>
<comment type="pathway">
    <text evidence="1">Cell wall biogenesis; peptidoglycan biosynthesis.</text>
</comment>
<comment type="subcellular location">
    <subcellularLocation>
        <location evidence="1">Cytoplasm</location>
    </subcellularLocation>
</comment>
<comment type="similarity">
    <text evidence="1">Belongs to the MurB family.</text>
</comment>
<sequence length="349" mass="37588">MPMSRPDSAVSLLPDYSLRAHNTFGFDARARVAARIGSPGQFASLARDPRVAGLDRLVLGGGSNVVFTRDFDGLVLLDEIRGRALVREDDGAWYVEAGGGENWHAFVEWTLAEGMPGLENLALIPGTVGAAPIQNIGAYGLEMKEHFASLRAVELATGELVEFDAARCAFGYRDSFFKRDGRGRFAIVAVTFRLPKAWTPRIGYADVARELAARGIDARAVRARDVFDAVVAIRRAKLPDPLALGNAGSFFKNPVIDAQAFAALRAREPDIVSYPQPDGRVKLAAGWLIDRCGWKGRALGAAAVHERQALVLVNLGGASGADVLALAHAIRRDVLGRFGVELEMEPVCL</sequence>
<proteinExistence type="inferred from homology"/>
<protein>
    <recommendedName>
        <fullName evidence="1">UDP-N-acetylenolpyruvoylglucosamine reductase</fullName>
        <ecNumber evidence="1">1.3.1.98</ecNumber>
    </recommendedName>
    <alternativeName>
        <fullName evidence="1">UDP-N-acetylmuramate dehydrogenase</fullName>
    </alternativeName>
</protein>
<dbReference type="EC" id="1.3.1.98" evidence="1"/>
<dbReference type="EMBL" id="CP000124">
    <property type="protein sequence ID" value="ABA49889.1"/>
    <property type="molecule type" value="Genomic_DNA"/>
</dbReference>
<dbReference type="RefSeq" id="WP_009929228.1">
    <property type="nucleotide sequence ID" value="NC_007434.1"/>
</dbReference>
<dbReference type="SMR" id="Q3JVB9"/>
<dbReference type="EnsemblBacteria" id="ABA49889">
    <property type="protein sequence ID" value="ABA49889"/>
    <property type="gene ID" value="BURPS1710b_1072"/>
</dbReference>
<dbReference type="KEGG" id="bpm:BURPS1710b_1072"/>
<dbReference type="HOGENOM" id="CLU_035304_0_0_4"/>
<dbReference type="UniPathway" id="UPA00219"/>
<dbReference type="Proteomes" id="UP000002700">
    <property type="component" value="Chromosome I"/>
</dbReference>
<dbReference type="GO" id="GO:0005829">
    <property type="term" value="C:cytosol"/>
    <property type="evidence" value="ECO:0007669"/>
    <property type="project" value="TreeGrafter"/>
</dbReference>
<dbReference type="GO" id="GO:0071949">
    <property type="term" value="F:FAD binding"/>
    <property type="evidence" value="ECO:0007669"/>
    <property type="project" value="InterPro"/>
</dbReference>
<dbReference type="GO" id="GO:0008762">
    <property type="term" value="F:UDP-N-acetylmuramate dehydrogenase activity"/>
    <property type="evidence" value="ECO:0007669"/>
    <property type="project" value="UniProtKB-UniRule"/>
</dbReference>
<dbReference type="GO" id="GO:0051301">
    <property type="term" value="P:cell division"/>
    <property type="evidence" value="ECO:0007669"/>
    <property type="project" value="UniProtKB-KW"/>
</dbReference>
<dbReference type="GO" id="GO:0071555">
    <property type="term" value="P:cell wall organization"/>
    <property type="evidence" value="ECO:0007669"/>
    <property type="project" value="UniProtKB-KW"/>
</dbReference>
<dbReference type="GO" id="GO:0009252">
    <property type="term" value="P:peptidoglycan biosynthetic process"/>
    <property type="evidence" value="ECO:0007669"/>
    <property type="project" value="UniProtKB-UniRule"/>
</dbReference>
<dbReference type="GO" id="GO:0008360">
    <property type="term" value="P:regulation of cell shape"/>
    <property type="evidence" value="ECO:0007669"/>
    <property type="project" value="UniProtKB-KW"/>
</dbReference>
<dbReference type="Gene3D" id="3.30.465.10">
    <property type="match status" value="1"/>
</dbReference>
<dbReference type="Gene3D" id="3.90.78.10">
    <property type="entry name" value="UDP-N-acetylenolpyruvoylglucosamine reductase, C-terminal domain"/>
    <property type="match status" value="1"/>
</dbReference>
<dbReference type="Gene3D" id="3.30.43.10">
    <property type="entry name" value="Uridine Diphospho-n-acetylenolpyruvylglucosamine Reductase, domain 2"/>
    <property type="match status" value="1"/>
</dbReference>
<dbReference type="HAMAP" id="MF_00037">
    <property type="entry name" value="MurB"/>
    <property type="match status" value="1"/>
</dbReference>
<dbReference type="InterPro" id="IPR016166">
    <property type="entry name" value="FAD-bd_PCMH"/>
</dbReference>
<dbReference type="InterPro" id="IPR036318">
    <property type="entry name" value="FAD-bd_PCMH-like_sf"/>
</dbReference>
<dbReference type="InterPro" id="IPR016167">
    <property type="entry name" value="FAD-bd_PCMH_sub1"/>
</dbReference>
<dbReference type="InterPro" id="IPR016169">
    <property type="entry name" value="FAD-bd_PCMH_sub2"/>
</dbReference>
<dbReference type="InterPro" id="IPR003170">
    <property type="entry name" value="MurB"/>
</dbReference>
<dbReference type="InterPro" id="IPR011601">
    <property type="entry name" value="MurB_C"/>
</dbReference>
<dbReference type="InterPro" id="IPR036635">
    <property type="entry name" value="MurB_C_sf"/>
</dbReference>
<dbReference type="InterPro" id="IPR006094">
    <property type="entry name" value="Oxid_FAD_bind_N"/>
</dbReference>
<dbReference type="NCBIfam" id="TIGR00179">
    <property type="entry name" value="murB"/>
    <property type="match status" value="1"/>
</dbReference>
<dbReference type="NCBIfam" id="NF000755">
    <property type="entry name" value="PRK00046.1"/>
    <property type="match status" value="1"/>
</dbReference>
<dbReference type="PANTHER" id="PTHR21071">
    <property type="entry name" value="UDP-N-ACETYLENOLPYRUVOYLGLUCOSAMINE REDUCTASE"/>
    <property type="match status" value="1"/>
</dbReference>
<dbReference type="PANTHER" id="PTHR21071:SF4">
    <property type="entry name" value="UDP-N-ACETYLENOLPYRUVOYLGLUCOSAMINE REDUCTASE"/>
    <property type="match status" value="1"/>
</dbReference>
<dbReference type="Pfam" id="PF01565">
    <property type="entry name" value="FAD_binding_4"/>
    <property type="match status" value="1"/>
</dbReference>
<dbReference type="Pfam" id="PF02873">
    <property type="entry name" value="MurB_C"/>
    <property type="match status" value="1"/>
</dbReference>
<dbReference type="SUPFAM" id="SSF56176">
    <property type="entry name" value="FAD-binding/transporter-associated domain-like"/>
    <property type="match status" value="1"/>
</dbReference>
<dbReference type="SUPFAM" id="SSF56194">
    <property type="entry name" value="Uridine diphospho-N-Acetylenolpyruvylglucosamine reductase, MurB, C-terminal domain"/>
    <property type="match status" value="1"/>
</dbReference>
<dbReference type="PROSITE" id="PS51387">
    <property type="entry name" value="FAD_PCMH"/>
    <property type="match status" value="1"/>
</dbReference>
<evidence type="ECO:0000255" key="1">
    <source>
        <dbReference type="HAMAP-Rule" id="MF_00037"/>
    </source>
</evidence>
<organism>
    <name type="scientific">Burkholderia pseudomallei (strain 1710b)</name>
    <dbReference type="NCBI Taxonomy" id="320372"/>
    <lineage>
        <taxon>Bacteria</taxon>
        <taxon>Pseudomonadati</taxon>
        <taxon>Pseudomonadota</taxon>
        <taxon>Betaproteobacteria</taxon>
        <taxon>Burkholderiales</taxon>
        <taxon>Burkholderiaceae</taxon>
        <taxon>Burkholderia</taxon>
        <taxon>pseudomallei group</taxon>
    </lineage>
</organism>
<gene>
    <name evidence="1" type="primary">murB</name>
    <name type="ordered locus">BURPS1710b_1072</name>
</gene>
<accession>Q3JVB9</accession>
<reference key="1">
    <citation type="journal article" date="2010" name="Genome Biol. Evol.">
        <title>Continuing evolution of Burkholderia mallei through genome reduction and large-scale rearrangements.</title>
        <authorList>
            <person name="Losada L."/>
            <person name="Ronning C.M."/>
            <person name="DeShazer D."/>
            <person name="Woods D."/>
            <person name="Fedorova N."/>
            <person name="Kim H.S."/>
            <person name="Shabalina S.A."/>
            <person name="Pearson T.R."/>
            <person name="Brinkac L."/>
            <person name="Tan P."/>
            <person name="Nandi T."/>
            <person name="Crabtree J."/>
            <person name="Badger J."/>
            <person name="Beckstrom-Sternberg S."/>
            <person name="Saqib M."/>
            <person name="Schutzer S.E."/>
            <person name="Keim P."/>
            <person name="Nierman W.C."/>
        </authorList>
    </citation>
    <scope>NUCLEOTIDE SEQUENCE [LARGE SCALE GENOMIC DNA]</scope>
    <source>
        <strain>1710b</strain>
    </source>
</reference>